<reference key="1">
    <citation type="journal article" date="1983" name="J. Virol.">
        <title>Sequential mutations in the NS genes of influenza virus field strains.</title>
        <authorList>
            <person name="Krystal M."/>
            <person name="Buonagurio D.A."/>
            <person name="Young J.F."/>
            <person name="Palese P."/>
        </authorList>
    </citation>
    <scope>NUCLEOTIDE SEQUENCE [GENOMIC RNA]</scope>
</reference>
<reference key="2">
    <citation type="journal article" date="2003" name="Virology">
        <title>Intracellular warfare between human influenza viruses and human cells: the roles of the viral NS1 protein.</title>
        <authorList>
            <person name="Krug R.M."/>
            <person name="Yuan W."/>
            <person name="Noah D.L."/>
            <person name="Latham A.G."/>
        </authorList>
    </citation>
    <scope>REVIEW</scope>
</reference>
<gene>
    <name evidence="1" type="primary">NS</name>
</gene>
<dbReference type="EMBL" id="K00576">
    <property type="protein sequence ID" value="AAA43525.1"/>
    <property type="molecule type" value="Genomic_RNA"/>
</dbReference>
<dbReference type="SMR" id="P69279"/>
<dbReference type="GO" id="GO:0030430">
    <property type="term" value="C:host cell cytoplasm"/>
    <property type="evidence" value="ECO:0007669"/>
    <property type="project" value="UniProtKB-SubCell"/>
</dbReference>
<dbReference type="GO" id="GO:0042025">
    <property type="term" value="C:host cell nucleus"/>
    <property type="evidence" value="ECO:0007669"/>
    <property type="project" value="UniProtKB-SubCell"/>
</dbReference>
<dbReference type="GO" id="GO:0030291">
    <property type="term" value="F:protein serine/threonine kinase inhibitor activity"/>
    <property type="evidence" value="ECO:0007669"/>
    <property type="project" value="UniProtKB-KW"/>
</dbReference>
<dbReference type="GO" id="GO:0003723">
    <property type="term" value="F:RNA binding"/>
    <property type="evidence" value="ECO:0007669"/>
    <property type="project" value="UniProtKB-KW"/>
</dbReference>
<dbReference type="GO" id="GO:0039540">
    <property type="term" value="P:symbiont-mediated suppression of host cytoplasmic pattern recognition receptor signaling pathway via inhibition of RIG-I activity"/>
    <property type="evidence" value="ECO:0007669"/>
    <property type="project" value="UniProtKB-KW"/>
</dbReference>
<dbReference type="GO" id="GO:0039657">
    <property type="term" value="P:symbiont-mediated suppression of host gene expression"/>
    <property type="evidence" value="ECO:0007669"/>
    <property type="project" value="UniProtKB-KW"/>
</dbReference>
<dbReference type="GO" id="GO:0039524">
    <property type="term" value="P:symbiont-mediated suppression of host mRNA processing"/>
    <property type="evidence" value="ECO:0007669"/>
    <property type="project" value="UniProtKB-KW"/>
</dbReference>
<dbReference type="GO" id="GO:0039580">
    <property type="term" value="P:symbiont-mediated suppression of host PKR/eIFalpha signaling"/>
    <property type="evidence" value="ECO:0007669"/>
    <property type="project" value="UniProtKB-KW"/>
</dbReference>
<dbReference type="GO" id="GO:0039502">
    <property type="term" value="P:symbiont-mediated suppression of host type I interferon-mediated signaling pathway"/>
    <property type="evidence" value="ECO:0007669"/>
    <property type="project" value="UniProtKB-KW"/>
</dbReference>
<dbReference type="FunFam" id="1.10.287.10:FF:000001">
    <property type="entry name" value="Non-structural protein 1"/>
    <property type="match status" value="1"/>
</dbReference>
<dbReference type="FunFam" id="3.30.420.330:FF:000001">
    <property type="entry name" value="Non-structural protein 1"/>
    <property type="match status" value="1"/>
</dbReference>
<dbReference type="Gene3D" id="3.30.420.330">
    <property type="entry name" value="Influenza virus non-structural protein, effector domain"/>
    <property type="match status" value="1"/>
</dbReference>
<dbReference type="Gene3D" id="1.10.287.10">
    <property type="entry name" value="S15/NS1, RNA-binding"/>
    <property type="match status" value="1"/>
</dbReference>
<dbReference type="HAMAP" id="MF_04066">
    <property type="entry name" value="INFV_NS1"/>
    <property type="match status" value="1"/>
</dbReference>
<dbReference type="InterPro" id="IPR004208">
    <property type="entry name" value="NS1"/>
</dbReference>
<dbReference type="InterPro" id="IPR000256">
    <property type="entry name" value="NS1A"/>
</dbReference>
<dbReference type="InterPro" id="IPR038064">
    <property type="entry name" value="NS1A_effect_dom-like_sf"/>
</dbReference>
<dbReference type="InterPro" id="IPR009068">
    <property type="entry name" value="uS15_NS1_RNA-bd_sf"/>
</dbReference>
<dbReference type="Pfam" id="PF00600">
    <property type="entry name" value="Flu_NS1"/>
    <property type="match status" value="1"/>
</dbReference>
<dbReference type="SUPFAM" id="SSF143021">
    <property type="entry name" value="Ns1 effector domain-like"/>
    <property type="match status" value="1"/>
</dbReference>
<dbReference type="SUPFAM" id="SSF47060">
    <property type="entry name" value="S15/NS1 RNA-binding domain"/>
    <property type="match status" value="1"/>
</dbReference>
<accession>P69279</accession>
<accession>P03497</accession>
<organismHost>
    <name type="scientific">Aves</name>
    <dbReference type="NCBI Taxonomy" id="8782"/>
</organismHost>
<organismHost>
    <name type="scientific">Homo sapiens</name>
    <name type="common">Human</name>
    <dbReference type="NCBI Taxonomy" id="9606"/>
</organismHost>
<organismHost>
    <name type="scientific">Sus scrofa</name>
    <name type="common">Pig</name>
    <dbReference type="NCBI Taxonomy" id="9823"/>
</organismHost>
<sequence length="237" mass="26889">MDPNTVSSFQVDCFLWHVRKQVADQELGDAPFLDRLRRDQKSLRGRGSTLGLNIETATRVGKQIVERILKEESDEALKMTMASAPASRYLTDMTIEEMSRDWFMLMPKQKVAGPLCIRMDQAIMDKNIILKANFSVIFDRLETLILLRAFTEEGAIVGEISPLPSLPGHTNEDVKNAIGVLIGGLEWSDNTVRVSKTLQRFAWRSSSENGRPPLTPKQKRKMARTIRSEVRRNKMAD</sequence>
<name>NS1_I50A0</name>
<evidence type="ECO:0000255" key="1">
    <source>
        <dbReference type="HAMAP-Rule" id="MF_04066"/>
    </source>
</evidence>
<evidence type="ECO:0000256" key="2">
    <source>
        <dbReference type="SAM" id="MobiDB-lite"/>
    </source>
</evidence>
<proteinExistence type="inferred from homology"/>
<organism>
    <name type="scientific">Influenza A virus (strain A/Fort Warren/1/1950 H1N1)</name>
    <dbReference type="NCBI Taxonomy" id="384525"/>
    <lineage>
        <taxon>Viruses</taxon>
        <taxon>Riboviria</taxon>
        <taxon>Orthornavirae</taxon>
        <taxon>Negarnaviricota</taxon>
        <taxon>Polyploviricotina</taxon>
        <taxon>Insthoviricetes</taxon>
        <taxon>Articulavirales</taxon>
        <taxon>Orthomyxoviridae</taxon>
        <taxon>Alphainfluenzavirus</taxon>
        <taxon>Alphainfluenzavirus influenzae</taxon>
        <taxon>Influenza A virus</taxon>
    </lineage>
</organism>
<keyword id="KW-0025">Alternative splicing</keyword>
<keyword id="KW-1262">Eukaryotic host gene expression shutoff by virus</keyword>
<keyword id="KW-1035">Host cytoplasm</keyword>
<keyword id="KW-1190">Host gene expression shutoff by virus</keyword>
<keyword id="KW-1192">Host mRNA suppression by virus</keyword>
<keyword id="KW-1048">Host nucleus</keyword>
<keyword id="KW-0945">Host-virus interaction</keyword>
<keyword id="KW-1090">Inhibition of host innate immune response by virus</keyword>
<keyword id="KW-1114">Inhibition of host interferon signaling pathway by virus</keyword>
<keyword id="KW-1102">Inhibition of host PKR by virus</keyword>
<keyword id="KW-1103">Inhibition of host pre-mRNA processing by virus</keyword>
<keyword id="KW-1088">Inhibition of host RIG-I by virus</keyword>
<keyword id="KW-1113">Inhibition of host RLR pathway by virus</keyword>
<keyword id="KW-0922">Interferon antiviral system evasion</keyword>
<keyword id="KW-0694">RNA-binding</keyword>
<keyword id="KW-0832">Ubl conjugation</keyword>
<keyword id="KW-0899">Viral immunoevasion</keyword>
<comment type="function">
    <text evidence="1">Inhibits post-transcriptional processing of cellular pre-mRNA, by binding and inhibiting two cellular proteins that are required for the 3'-end processing of cellular pre-mRNAs: the 30 kDa cleavage and polyadenylation specificity factor/CPSF4 and the poly(A)-binding protein 2/PABPN1. In turn, unprocessed 3' end pre-mRNAs accumulate in the host nucleus and are no longer exported to the cytoplasm. Cellular protein synthesis is thereby shut off very early after virus infection. Viral protein synthesis is not affected by the inhibition of the cellular 3' end processing machinery because the poly(A) tails of viral mRNAs are produced by the viral polymerase through a stuttering mechanism. Prevents the establishment of the cellular antiviral state by inhibiting TRIM25-mediated RIGI ubiquitination, which normally triggers the antiviral transduction signal that leads to the activation of type I IFN genes by transcription factors IRF3 and IRF7. Also binds poly(A) and U6 snRNA. Inhibits the integrated stress response (ISR) in the infected cell by blocking dsRNA binding by EIF2AK2/PKR and further phosphorylation of EIF2S1/EIF-2ALPHA. Stress granule formation is thus inhibited, which allows protein synthesis and viral replication.</text>
</comment>
<comment type="subunit">
    <text evidence="1">Homodimer. Interacts with host TRIM25 (via coiled coil); this interaction specifically inhibits TRIM25 multimerization and TRIM25-mediated RIGI CARD ubiquitination. Interacts with human EIF2AK2/PKR, CPSF4, IVNS1ABP and PABPN1.</text>
</comment>
<comment type="subcellular location">
    <subcellularLocation>
        <location evidence="1">Host nucleus</location>
    </subcellularLocation>
    <subcellularLocation>
        <location evidence="1">Host cytoplasm</location>
    </subcellularLocation>
    <text evidence="1">In uninfected, transfected cells, NS1 is localized in the nucleus. Only in virus infected cells, the nuclear export signal is unveiled, presumably by a viral protein, and a fraction of NS1 is exported in the cytoplasm.</text>
</comment>
<comment type="alternative products">
    <event type="alternative splicing"/>
    <isoform>
        <id>P69279-1</id>
        <name>NS1</name>
        <sequence type="displayed"/>
    </isoform>
    <isoform>
        <id>P03505-1</id>
        <name>NEP</name>
        <name>NS2</name>
        <sequence type="external"/>
    </isoform>
</comment>
<comment type="domain">
    <text evidence="1">The dsRNA-binding region is required for suppression of RNA silencing.</text>
</comment>
<comment type="PTM">
    <text evidence="1">Upon interferon induction, ISGylated via host HERC5; this results in the impairment of NS1 interaction with RNA targets due to its inability to form homodimers and to interact with host EIF2AK2/PKR.</text>
</comment>
<comment type="similarity">
    <text evidence="1">Belongs to the influenza A viruses NS1 family.</text>
</comment>
<feature type="chain" id="PRO_0000078929" description="Non-structural protein 1">
    <location>
        <begin position="1"/>
        <end position="237"/>
    </location>
</feature>
<feature type="region of interest" description="RNA-binding and homodimerization" evidence="1">
    <location>
        <begin position="1"/>
        <end position="73"/>
    </location>
</feature>
<feature type="region of interest" description="CPSF4-binding" evidence="1">
    <location>
        <begin position="180"/>
        <end position="215"/>
    </location>
</feature>
<feature type="region of interest" description="Disordered" evidence="2">
    <location>
        <begin position="204"/>
        <end position="237"/>
    </location>
</feature>
<feature type="region of interest" description="PABPN1-binding" evidence="1">
    <location>
        <begin position="223"/>
        <end position="230"/>
    </location>
</feature>
<feature type="short sequence motif" description="Nuclear localization signal" evidence="1">
    <location>
        <begin position="34"/>
        <end position="38"/>
    </location>
</feature>
<feature type="short sequence motif" description="Nuclear export signal" evidence="1">
    <location>
        <begin position="137"/>
        <end position="146"/>
    </location>
</feature>
<feature type="compositionally biased region" description="Basic and acidic residues" evidence="2">
    <location>
        <begin position="226"/>
        <end position="237"/>
    </location>
</feature>
<protein>
    <recommendedName>
        <fullName evidence="1">Non-structural protein 1</fullName>
        <shortName evidence="1">NS1</shortName>
    </recommendedName>
    <alternativeName>
        <fullName evidence="1">NS1A</fullName>
    </alternativeName>
</protein>